<protein>
    <recommendedName>
        <fullName evidence="1">GTPase Era</fullName>
    </recommendedName>
</protein>
<proteinExistence type="inferred from homology"/>
<name>ERA_STAA2</name>
<sequence length="299" mass="34329">MTEHKSGFVSIIGRPNVGKSTFVNRVIGHKIAIMSDKAQTTRNKIQGVMTRDDAQIIFIDTPGIHKPKHKLGDYMMKVAKNTLSEIDAIMFMVNANEEIGRGDEYIIEMLKNVKTPVFLVLNKIDLVHPDELMPKIEEYQSYMDFTEIVPISALEGLNVDHFIDVLKTYLPEGPKYYPDDQISDHPEQFVVGEIIREKILHLTSEEIPHAIGVNVDRMVKESEDRVHIEATIYVERDSQKGIVIGKGGKKLKEVGKRARRDIEMLLGSKVYLELWVKVQRDWRNKVNFIRQIGYVEDQD</sequence>
<accession>A6U239</accession>
<gene>
    <name evidence="1" type="primary">era</name>
    <name type="ordered locus">SaurJH1_1659</name>
</gene>
<evidence type="ECO:0000255" key="1">
    <source>
        <dbReference type="HAMAP-Rule" id="MF_00367"/>
    </source>
</evidence>
<evidence type="ECO:0000255" key="2">
    <source>
        <dbReference type="PROSITE-ProRule" id="PRU01050"/>
    </source>
</evidence>
<keyword id="KW-1003">Cell membrane</keyword>
<keyword id="KW-0963">Cytoplasm</keyword>
<keyword id="KW-0342">GTP-binding</keyword>
<keyword id="KW-0472">Membrane</keyword>
<keyword id="KW-0547">Nucleotide-binding</keyword>
<keyword id="KW-0690">Ribosome biogenesis</keyword>
<keyword id="KW-0694">RNA-binding</keyword>
<keyword id="KW-0699">rRNA-binding</keyword>
<feature type="chain" id="PRO_1000079741" description="GTPase Era">
    <location>
        <begin position="1"/>
        <end position="299"/>
    </location>
</feature>
<feature type="domain" description="Era-type G" evidence="2">
    <location>
        <begin position="5"/>
        <end position="172"/>
    </location>
</feature>
<feature type="domain" description="KH type-2" evidence="1">
    <location>
        <begin position="203"/>
        <end position="280"/>
    </location>
</feature>
<feature type="region of interest" description="G1" evidence="2">
    <location>
        <begin position="13"/>
        <end position="20"/>
    </location>
</feature>
<feature type="region of interest" description="G2" evidence="2">
    <location>
        <begin position="39"/>
        <end position="43"/>
    </location>
</feature>
<feature type="region of interest" description="G3" evidence="2">
    <location>
        <begin position="60"/>
        <end position="63"/>
    </location>
</feature>
<feature type="region of interest" description="G4" evidence="2">
    <location>
        <begin position="122"/>
        <end position="125"/>
    </location>
</feature>
<feature type="region of interest" description="G5" evidence="2">
    <location>
        <begin position="151"/>
        <end position="153"/>
    </location>
</feature>
<feature type="binding site" evidence="1">
    <location>
        <begin position="13"/>
        <end position="20"/>
    </location>
    <ligand>
        <name>GTP</name>
        <dbReference type="ChEBI" id="CHEBI:37565"/>
    </ligand>
</feature>
<feature type="binding site" evidence="1">
    <location>
        <begin position="60"/>
        <end position="64"/>
    </location>
    <ligand>
        <name>GTP</name>
        <dbReference type="ChEBI" id="CHEBI:37565"/>
    </ligand>
</feature>
<feature type="binding site" evidence="1">
    <location>
        <begin position="122"/>
        <end position="125"/>
    </location>
    <ligand>
        <name>GTP</name>
        <dbReference type="ChEBI" id="CHEBI:37565"/>
    </ligand>
</feature>
<comment type="function">
    <text evidence="1">An essential GTPase that binds both GDP and GTP, with rapid nucleotide exchange. Plays a role in 16S rRNA processing and 30S ribosomal subunit biogenesis and possibly also in cell cycle regulation and energy metabolism.</text>
</comment>
<comment type="subunit">
    <text evidence="1">Monomer.</text>
</comment>
<comment type="subcellular location">
    <subcellularLocation>
        <location>Cytoplasm</location>
    </subcellularLocation>
    <subcellularLocation>
        <location evidence="1">Cell membrane</location>
        <topology evidence="1">Peripheral membrane protein</topology>
    </subcellularLocation>
</comment>
<comment type="similarity">
    <text evidence="1 2">Belongs to the TRAFAC class TrmE-Era-EngA-EngB-Septin-like GTPase superfamily. Era GTPase family.</text>
</comment>
<organism>
    <name type="scientific">Staphylococcus aureus (strain JH1)</name>
    <dbReference type="NCBI Taxonomy" id="359787"/>
    <lineage>
        <taxon>Bacteria</taxon>
        <taxon>Bacillati</taxon>
        <taxon>Bacillota</taxon>
        <taxon>Bacilli</taxon>
        <taxon>Bacillales</taxon>
        <taxon>Staphylococcaceae</taxon>
        <taxon>Staphylococcus</taxon>
    </lineage>
</organism>
<dbReference type="EMBL" id="CP000736">
    <property type="protein sequence ID" value="ABR52507.1"/>
    <property type="molecule type" value="Genomic_DNA"/>
</dbReference>
<dbReference type="SMR" id="A6U239"/>
<dbReference type="KEGG" id="sah:SaurJH1_1659"/>
<dbReference type="HOGENOM" id="CLU_038009_1_0_9"/>
<dbReference type="GO" id="GO:0005829">
    <property type="term" value="C:cytosol"/>
    <property type="evidence" value="ECO:0007669"/>
    <property type="project" value="TreeGrafter"/>
</dbReference>
<dbReference type="GO" id="GO:0005886">
    <property type="term" value="C:plasma membrane"/>
    <property type="evidence" value="ECO:0007669"/>
    <property type="project" value="UniProtKB-SubCell"/>
</dbReference>
<dbReference type="GO" id="GO:0005525">
    <property type="term" value="F:GTP binding"/>
    <property type="evidence" value="ECO:0007669"/>
    <property type="project" value="UniProtKB-UniRule"/>
</dbReference>
<dbReference type="GO" id="GO:0003924">
    <property type="term" value="F:GTPase activity"/>
    <property type="evidence" value="ECO:0007669"/>
    <property type="project" value="UniProtKB-UniRule"/>
</dbReference>
<dbReference type="GO" id="GO:0043024">
    <property type="term" value="F:ribosomal small subunit binding"/>
    <property type="evidence" value="ECO:0007669"/>
    <property type="project" value="TreeGrafter"/>
</dbReference>
<dbReference type="GO" id="GO:0070181">
    <property type="term" value="F:small ribosomal subunit rRNA binding"/>
    <property type="evidence" value="ECO:0007669"/>
    <property type="project" value="UniProtKB-UniRule"/>
</dbReference>
<dbReference type="GO" id="GO:0000028">
    <property type="term" value="P:ribosomal small subunit assembly"/>
    <property type="evidence" value="ECO:0007669"/>
    <property type="project" value="TreeGrafter"/>
</dbReference>
<dbReference type="CDD" id="cd04163">
    <property type="entry name" value="Era"/>
    <property type="match status" value="1"/>
</dbReference>
<dbReference type="CDD" id="cd22534">
    <property type="entry name" value="KH-II_Era"/>
    <property type="match status" value="1"/>
</dbReference>
<dbReference type="FunFam" id="3.30.300.20:FF:000003">
    <property type="entry name" value="GTPase Era"/>
    <property type="match status" value="1"/>
</dbReference>
<dbReference type="FunFam" id="3.40.50.300:FF:000094">
    <property type="entry name" value="GTPase Era"/>
    <property type="match status" value="1"/>
</dbReference>
<dbReference type="Gene3D" id="3.30.300.20">
    <property type="match status" value="1"/>
</dbReference>
<dbReference type="Gene3D" id="3.40.50.300">
    <property type="entry name" value="P-loop containing nucleotide triphosphate hydrolases"/>
    <property type="match status" value="1"/>
</dbReference>
<dbReference type="HAMAP" id="MF_00367">
    <property type="entry name" value="GTPase_Era"/>
    <property type="match status" value="1"/>
</dbReference>
<dbReference type="InterPro" id="IPR030388">
    <property type="entry name" value="G_ERA_dom"/>
</dbReference>
<dbReference type="InterPro" id="IPR006073">
    <property type="entry name" value="GTP-bd"/>
</dbReference>
<dbReference type="InterPro" id="IPR005662">
    <property type="entry name" value="GTPase_Era-like"/>
</dbReference>
<dbReference type="InterPro" id="IPR015946">
    <property type="entry name" value="KH_dom-like_a/b"/>
</dbReference>
<dbReference type="InterPro" id="IPR004044">
    <property type="entry name" value="KH_dom_type_2"/>
</dbReference>
<dbReference type="InterPro" id="IPR009019">
    <property type="entry name" value="KH_sf_prok-type"/>
</dbReference>
<dbReference type="InterPro" id="IPR027417">
    <property type="entry name" value="P-loop_NTPase"/>
</dbReference>
<dbReference type="InterPro" id="IPR005225">
    <property type="entry name" value="Small_GTP-bd"/>
</dbReference>
<dbReference type="NCBIfam" id="TIGR00436">
    <property type="entry name" value="era"/>
    <property type="match status" value="1"/>
</dbReference>
<dbReference type="NCBIfam" id="NF000908">
    <property type="entry name" value="PRK00089.1"/>
    <property type="match status" value="1"/>
</dbReference>
<dbReference type="NCBIfam" id="TIGR00231">
    <property type="entry name" value="small_GTP"/>
    <property type="match status" value="1"/>
</dbReference>
<dbReference type="PANTHER" id="PTHR42698">
    <property type="entry name" value="GTPASE ERA"/>
    <property type="match status" value="1"/>
</dbReference>
<dbReference type="PANTHER" id="PTHR42698:SF1">
    <property type="entry name" value="GTPASE ERA, MITOCHONDRIAL"/>
    <property type="match status" value="1"/>
</dbReference>
<dbReference type="Pfam" id="PF07650">
    <property type="entry name" value="KH_2"/>
    <property type="match status" value="1"/>
</dbReference>
<dbReference type="Pfam" id="PF01926">
    <property type="entry name" value="MMR_HSR1"/>
    <property type="match status" value="1"/>
</dbReference>
<dbReference type="SUPFAM" id="SSF52540">
    <property type="entry name" value="P-loop containing nucleoside triphosphate hydrolases"/>
    <property type="match status" value="1"/>
</dbReference>
<dbReference type="SUPFAM" id="SSF54814">
    <property type="entry name" value="Prokaryotic type KH domain (KH-domain type II)"/>
    <property type="match status" value="1"/>
</dbReference>
<dbReference type="PROSITE" id="PS51713">
    <property type="entry name" value="G_ERA"/>
    <property type="match status" value="1"/>
</dbReference>
<dbReference type="PROSITE" id="PS50823">
    <property type="entry name" value="KH_TYPE_2"/>
    <property type="match status" value="1"/>
</dbReference>
<reference key="1">
    <citation type="submission" date="2007-06" db="EMBL/GenBank/DDBJ databases">
        <title>Complete sequence of chromosome of Staphylococcus aureus subsp. aureus JH1.</title>
        <authorList>
            <consortium name="US DOE Joint Genome Institute"/>
            <person name="Copeland A."/>
            <person name="Lucas S."/>
            <person name="Lapidus A."/>
            <person name="Barry K."/>
            <person name="Detter J.C."/>
            <person name="Glavina del Rio T."/>
            <person name="Hammon N."/>
            <person name="Israni S."/>
            <person name="Dalin E."/>
            <person name="Tice H."/>
            <person name="Pitluck S."/>
            <person name="Chain P."/>
            <person name="Malfatti S."/>
            <person name="Shin M."/>
            <person name="Vergez L."/>
            <person name="Schmutz J."/>
            <person name="Larimer F."/>
            <person name="Land M."/>
            <person name="Hauser L."/>
            <person name="Kyrpides N."/>
            <person name="Ivanova N."/>
            <person name="Tomasz A."/>
            <person name="Richardson P."/>
        </authorList>
    </citation>
    <scope>NUCLEOTIDE SEQUENCE [LARGE SCALE GENOMIC DNA]</scope>
    <source>
        <strain>JH1</strain>
    </source>
</reference>